<dbReference type="EC" id="4.1.1.65" evidence="1"/>
<dbReference type="EMBL" id="CP001072">
    <property type="protein sequence ID" value="ACD48803.1"/>
    <property type="molecule type" value="Genomic_DNA"/>
</dbReference>
<dbReference type="RefSeq" id="WP_000561118.1">
    <property type="nucleotide sequence ID" value="NC_010698.2"/>
</dbReference>
<dbReference type="SMR" id="B2UVC1"/>
<dbReference type="KEGG" id="hps:HPSH_07025"/>
<dbReference type="HOGENOM" id="CLU_029061_4_0_7"/>
<dbReference type="UniPathway" id="UPA00558">
    <property type="reaction ID" value="UER00616"/>
</dbReference>
<dbReference type="GO" id="GO:0005886">
    <property type="term" value="C:plasma membrane"/>
    <property type="evidence" value="ECO:0007669"/>
    <property type="project" value="UniProtKB-SubCell"/>
</dbReference>
<dbReference type="GO" id="GO:0004609">
    <property type="term" value="F:phosphatidylserine decarboxylase activity"/>
    <property type="evidence" value="ECO:0007669"/>
    <property type="project" value="UniProtKB-UniRule"/>
</dbReference>
<dbReference type="GO" id="GO:0006646">
    <property type="term" value="P:phosphatidylethanolamine biosynthetic process"/>
    <property type="evidence" value="ECO:0007669"/>
    <property type="project" value="UniProtKB-UniRule"/>
</dbReference>
<dbReference type="HAMAP" id="MF_00662">
    <property type="entry name" value="PS_decarb_PSD_B_type1"/>
    <property type="match status" value="1"/>
</dbReference>
<dbReference type="InterPro" id="IPR003817">
    <property type="entry name" value="PS_Dcarbxylase"/>
</dbReference>
<dbReference type="InterPro" id="IPR033177">
    <property type="entry name" value="PSD-B"/>
</dbReference>
<dbReference type="InterPro" id="IPR033178">
    <property type="entry name" value="PSD_type1_pro"/>
</dbReference>
<dbReference type="NCBIfam" id="NF003038">
    <property type="entry name" value="PRK03934.1"/>
    <property type="match status" value="1"/>
</dbReference>
<dbReference type="NCBIfam" id="TIGR00163">
    <property type="entry name" value="PS_decarb"/>
    <property type="match status" value="1"/>
</dbReference>
<dbReference type="PANTHER" id="PTHR10067">
    <property type="entry name" value="PHOSPHATIDYLSERINE DECARBOXYLASE"/>
    <property type="match status" value="1"/>
</dbReference>
<dbReference type="PANTHER" id="PTHR10067:SF6">
    <property type="entry name" value="PHOSPHATIDYLSERINE DECARBOXYLASE PROENZYME, MITOCHONDRIAL"/>
    <property type="match status" value="1"/>
</dbReference>
<dbReference type="Pfam" id="PF02666">
    <property type="entry name" value="PS_Dcarbxylase"/>
    <property type="match status" value="1"/>
</dbReference>
<feature type="chain" id="PRO_1000131382" description="Phosphatidylserine decarboxylase beta chain" evidence="1">
    <location>
        <begin position="1"/>
        <end position="235"/>
    </location>
</feature>
<feature type="chain" id="PRO_1000131383" description="Phosphatidylserine decarboxylase alpha chain" evidence="1">
    <location>
        <begin position="236"/>
        <end position="267"/>
    </location>
</feature>
<feature type="active site" description="Charge relay system; for autoendoproteolytic cleavage activity" evidence="1">
    <location>
        <position position="78"/>
    </location>
</feature>
<feature type="active site" description="Charge relay system; for autoendoproteolytic cleavage activity" evidence="1">
    <location>
        <position position="132"/>
    </location>
</feature>
<feature type="active site" description="Charge relay system; for autoendoproteolytic cleavage activity" evidence="1">
    <location>
        <position position="236"/>
    </location>
</feature>
<feature type="active site" description="Schiff-base intermediate with substrate; via pyruvic acid; for decarboxylase activity" evidence="1">
    <location>
        <position position="236"/>
    </location>
</feature>
<feature type="site" description="Cleavage (non-hydrolytic); by autocatalysis" evidence="1">
    <location>
        <begin position="235"/>
        <end position="236"/>
    </location>
</feature>
<feature type="modified residue" description="Pyruvic acid (Ser); by autocatalysis" evidence="1">
    <location>
        <position position="236"/>
    </location>
</feature>
<sequence>MIALSNALSRVFGSVAGYEFPSFIQKGINALYVKIFKIDLSEFEPLENYKSLNALFTRSLKKERPFDKTPNACIAPCDALITECAFLDNDSALQIKGMPYKAHELVGEINPLSPSFFYVNFYLSPKDYHHYHAPCDLEILEARCFAGKLLPVNKPSLHKNKNLFVGNERVALVAKDIQGNRLYFVAVGALNVGKMRFNFDKNIQTNAKAHLTQAYSYNPPIKVKKGDNLGNFEMGSTIVLFVQNTAFKDLKEKSVKFGESIGEFHAN</sequence>
<comment type="function">
    <text evidence="1">Catalyzes the formation of phosphatidylethanolamine (PtdEtn) from phosphatidylserine (PtdSer).</text>
</comment>
<comment type="catalytic activity">
    <reaction evidence="1">
        <text>a 1,2-diacyl-sn-glycero-3-phospho-L-serine + H(+) = a 1,2-diacyl-sn-glycero-3-phosphoethanolamine + CO2</text>
        <dbReference type="Rhea" id="RHEA:20828"/>
        <dbReference type="ChEBI" id="CHEBI:15378"/>
        <dbReference type="ChEBI" id="CHEBI:16526"/>
        <dbReference type="ChEBI" id="CHEBI:57262"/>
        <dbReference type="ChEBI" id="CHEBI:64612"/>
        <dbReference type="EC" id="4.1.1.65"/>
    </reaction>
</comment>
<comment type="cofactor">
    <cofactor evidence="1">
        <name>pyruvate</name>
        <dbReference type="ChEBI" id="CHEBI:15361"/>
    </cofactor>
    <text evidence="1">Binds 1 pyruvoyl group covalently per subunit.</text>
</comment>
<comment type="pathway">
    <text evidence="1">Phospholipid metabolism; phosphatidylethanolamine biosynthesis; phosphatidylethanolamine from CDP-diacylglycerol: step 2/2.</text>
</comment>
<comment type="subunit">
    <text evidence="1">Heterodimer of a large membrane-associated beta subunit and a small pyruvoyl-containing alpha subunit.</text>
</comment>
<comment type="subcellular location">
    <subcellularLocation>
        <location evidence="1">Cell membrane</location>
        <topology evidence="1">Peripheral membrane protein</topology>
    </subcellularLocation>
</comment>
<comment type="PTM">
    <text evidence="1">Is synthesized initially as an inactive proenzyme. Formation of the active enzyme involves a self-maturation process in which the active site pyruvoyl group is generated from an internal serine residue via an autocatalytic post-translational modification. Two non-identical subunits are generated from the proenzyme in this reaction, and the pyruvate is formed at the N-terminus of the alpha chain, which is derived from the carboxyl end of the proenzyme. The autoendoproteolytic cleavage occurs by a canonical serine protease mechanism, in which the side chain hydroxyl group of the serine supplies its oxygen atom to form the C-terminus of the beta chain, while the remainder of the serine residue undergoes an oxidative deamination to produce ammonia and the pyruvoyl prosthetic group on the alpha chain. During this reaction, the Ser that is part of the protease active site of the proenzyme becomes the pyruvoyl prosthetic group, which constitutes an essential element of the active site of the mature decarboxylase.</text>
</comment>
<comment type="similarity">
    <text evidence="1">Belongs to the phosphatidylserine decarboxylase family. PSD-B subfamily. Prokaryotic type I sub-subfamily.</text>
</comment>
<name>PSD_HELPS</name>
<accession>B2UVC1</accession>
<gene>
    <name evidence="1" type="primary">psd</name>
    <name type="ordered locus">HPSH_07025</name>
</gene>
<organism>
    <name type="scientific">Helicobacter pylori (strain Shi470)</name>
    <dbReference type="NCBI Taxonomy" id="512562"/>
    <lineage>
        <taxon>Bacteria</taxon>
        <taxon>Pseudomonadati</taxon>
        <taxon>Campylobacterota</taxon>
        <taxon>Epsilonproteobacteria</taxon>
        <taxon>Campylobacterales</taxon>
        <taxon>Helicobacteraceae</taxon>
        <taxon>Helicobacter</taxon>
    </lineage>
</organism>
<protein>
    <recommendedName>
        <fullName evidence="1">Phosphatidylserine decarboxylase proenzyme</fullName>
        <ecNumber evidence="1">4.1.1.65</ecNumber>
    </recommendedName>
    <component>
        <recommendedName>
            <fullName evidence="1">Phosphatidylserine decarboxylase alpha chain</fullName>
        </recommendedName>
    </component>
    <component>
        <recommendedName>
            <fullName evidence="1">Phosphatidylserine decarboxylase beta chain</fullName>
        </recommendedName>
    </component>
</protein>
<reference key="1">
    <citation type="submission" date="2008-05" db="EMBL/GenBank/DDBJ databases">
        <title>Genome sequence of Helicobacter pylori from the remote Amazon: traces of Asian ancestry of the first Americans.</title>
        <authorList>
            <person name="Kersulyte D."/>
            <person name="Kalia A."/>
            <person name="Gilman R.H."/>
            <person name="Berg D.E."/>
        </authorList>
    </citation>
    <scope>NUCLEOTIDE SEQUENCE [LARGE SCALE GENOMIC DNA]</scope>
    <source>
        <strain>Shi470</strain>
    </source>
</reference>
<proteinExistence type="inferred from homology"/>
<evidence type="ECO:0000255" key="1">
    <source>
        <dbReference type="HAMAP-Rule" id="MF_00662"/>
    </source>
</evidence>
<keyword id="KW-1003">Cell membrane</keyword>
<keyword id="KW-0210">Decarboxylase</keyword>
<keyword id="KW-0444">Lipid biosynthesis</keyword>
<keyword id="KW-0443">Lipid metabolism</keyword>
<keyword id="KW-0456">Lyase</keyword>
<keyword id="KW-0472">Membrane</keyword>
<keyword id="KW-0594">Phospholipid biosynthesis</keyword>
<keyword id="KW-1208">Phospholipid metabolism</keyword>
<keyword id="KW-0670">Pyruvate</keyword>
<keyword id="KW-0865">Zymogen</keyword>